<accession>Q12354</accession>
<accession>D6VYB6</accession>
<dbReference type="EC" id="3.1.2.-" evidence="2"/>
<dbReference type="EC" id="3.1.2.22" evidence="2"/>
<dbReference type="EMBL" id="X89514">
    <property type="protein sequence ID" value="CAA61697.1"/>
    <property type="molecule type" value="Genomic_DNA"/>
</dbReference>
<dbReference type="EMBL" id="U53877">
    <property type="protein sequence ID" value="AAB82365.1"/>
    <property type="molecule type" value="Genomic_DNA"/>
</dbReference>
<dbReference type="EMBL" id="Z73290">
    <property type="protein sequence ID" value="CAA97686.1"/>
    <property type="molecule type" value="Genomic_DNA"/>
</dbReference>
<dbReference type="EMBL" id="AY557939">
    <property type="protein sequence ID" value="AAS56265.1"/>
    <property type="molecule type" value="Genomic_DNA"/>
</dbReference>
<dbReference type="EMBL" id="BK006945">
    <property type="protein sequence ID" value="DAA09432.1"/>
    <property type="molecule type" value="Genomic_DNA"/>
</dbReference>
<dbReference type="PIR" id="S64955">
    <property type="entry name" value="S64955"/>
</dbReference>
<dbReference type="SMR" id="Q12354"/>
<dbReference type="BioGRID" id="31390">
    <property type="interactions" value="60"/>
</dbReference>
<dbReference type="DIP" id="DIP-2830N"/>
<dbReference type="FunCoup" id="Q12354">
    <property type="interactions" value="570"/>
</dbReference>
<dbReference type="IntAct" id="Q12354">
    <property type="interactions" value="5"/>
</dbReference>
<dbReference type="MINT" id="Q12354"/>
<dbReference type="STRING" id="4932.YLR118C"/>
<dbReference type="ESTHER" id="yeast-YLR118c">
    <property type="family name" value="LYsophospholipase_carboxylesterase"/>
</dbReference>
<dbReference type="iPTMnet" id="Q12354"/>
<dbReference type="PaxDb" id="4932-YLR118C"/>
<dbReference type="PeptideAtlas" id="Q12354"/>
<dbReference type="PRIDE" id="Q12354"/>
<dbReference type="EnsemblFungi" id="YLR118C_mRNA">
    <property type="protein sequence ID" value="YLR118C"/>
    <property type="gene ID" value="YLR118C"/>
</dbReference>
<dbReference type="KEGG" id="sce:YLR118C"/>
<dbReference type="AGR" id="SGD:S000004108"/>
<dbReference type="SGD" id="S000004108">
    <property type="gene designation" value="YLR118C"/>
</dbReference>
<dbReference type="VEuPathDB" id="FungiDB:YLR118C"/>
<dbReference type="eggNOG" id="KOG2112">
    <property type="taxonomic scope" value="Eukaryota"/>
</dbReference>
<dbReference type="GeneTree" id="ENSGT00940000173516"/>
<dbReference type="HOGENOM" id="CLU_049413_3_3_1"/>
<dbReference type="InParanoid" id="Q12354"/>
<dbReference type="OMA" id="WYDILAM"/>
<dbReference type="OrthoDB" id="2418081at2759"/>
<dbReference type="BioCyc" id="YEAST:G3O-32263-MONOMER"/>
<dbReference type="Reactome" id="R-SCE-203615">
    <property type="pathway name" value="eNOS activation"/>
</dbReference>
<dbReference type="Reactome" id="R-SCE-9648002">
    <property type="pathway name" value="RAS processing"/>
</dbReference>
<dbReference type="BioGRID-ORCS" id="850809">
    <property type="hits" value="6 hits in 10 CRISPR screens"/>
</dbReference>
<dbReference type="PRO" id="PR:Q12354"/>
<dbReference type="Proteomes" id="UP000002311">
    <property type="component" value="Chromosome XII"/>
</dbReference>
<dbReference type="RNAct" id="Q12354">
    <property type="molecule type" value="protein"/>
</dbReference>
<dbReference type="GO" id="GO:0005737">
    <property type="term" value="C:cytoplasm"/>
    <property type="evidence" value="ECO:0007005"/>
    <property type="project" value="SGD"/>
</dbReference>
<dbReference type="GO" id="GO:0005634">
    <property type="term" value="C:nucleus"/>
    <property type="evidence" value="ECO:0007005"/>
    <property type="project" value="SGD"/>
</dbReference>
<dbReference type="GO" id="GO:0052689">
    <property type="term" value="F:carboxylic ester hydrolase activity"/>
    <property type="evidence" value="ECO:0000318"/>
    <property type="project" value="GO_Central"/>
</dbReference>
<dbReference type="GO" id="GO:0008474">
    <property type="term" value="F:palmitoyl-(protein) hydrolase activity"/>
    <property type="evidence" value="ECO:0000314"/>
    <property type="project" value="SGD"/>
</dbReference>
<dbReference type="GO" id="GO:0006631">
    <property type="term" value="P:fatty acid metabolic process"/>
    <property type="evidence" value="ECO:0007669"/>
    <property type="project" value="UniProtKB-KW"/>
</dbReference>
<dbReference type="FunFam" id="3.40.50.1820:FF:000396">
    <property type="entry name" value="Acyl-protein thioesterase"/>
    <property type="match status" value="1"/>
</dbReference>
<dbReference type="Gene3D" id="3.40.50.1820">
    <property type="entry name" value="alpha/beta hydrolase"/>
    <property type="match status" value="1"/>
</dbReference>
<dbReference type="InterPro" id="IPR029058">
    <property type="entry name" value="AB_hydrolase_fold"/>
</dbReference>
<dbReference type="InterPro" id="IPR050565">
    <property type="entry name" value="LYPA1-2/EST-like"/>
</dbReference>
<dbReference type="InterPro" id="IPR003140">
    <property type="entry name" value="PLipase/COase/thioEstase"/>
</dbReference>
<dbReference type="PANTHER" id="PTHR10655:SF17">
    <property type="entry name" value="LYSOPHOSPHOLIPASE-LIKE PROTEIN 1"/>
    <property type="match status" value="1"/>
</dbReference>
<dbReference type="PANTHER" id="PTHR10655">
    <property type="entry name" value="LYSOPHOSPHOLIPASE-RELATED"/>
    <property type="match status" value="1"/>
</dbReference>
<dbReference type="Pfam" id="PF02230">
    <property type="entry name" value="Abhydrolase_2"/>
    <property type="match status" value="1"/>
</dbReference>
<dbReference type="SUPFAM" id="SSF53474">
    <property type="entry name" value="alpha/beta-Hydrolases"/>
    <property type="match status" value="1"/>
</dbReference>
<organism>
    <name type="scientific">Saccharomyces cerevisiae (strain ATCC 204508 / S288c)</name>
    <name type="common">Baker's yeast</name>
    <dbReference type="NCBI Taxonomy" id="559292"/>
    <lineage>
        <taxon>Eukaryota</taxon>
        <taxon>Fungi</taxon>
        <taxon>Dikarya</taxon>
        <taxon>Ascomycota</taxon>
        <taxon>Saccharomycotina</taxon>
        <taxon>Saccharomycetes</taxon>
        <taxon>Saccharomycetales</taxon>
        <taxon>Saccharomycetaceae</taxon>
        <taxon>Saccharomyces</taxon>
    </lineage>
</organism>
<reference key="1">
    <citation type="journal article" date="1997" name="Yeast">
        <title>Sequence analysis of a 37.6 kbp cosmid clone from the right arm of Saccharomyces cerevisiae chromosome XII, carrying YAP3, HOG1, SNR6, tRNA-Arg3 and 23 new open reading frames, among which several homologies to proteins involved in cell division control and to mammalian growth factors and other animal proteins are found.</title>
        <authorList>
            <person name="Verhasselt P."/>
            <person name="Volckaert G."/>
        </authorList>
    </citation>
    <scope>NUCLEOTIDE SEQUENCE [GENOMIC DNA]</scope>
    <source>
        <strain>ATCC 90840 / EAY235 / FY23</strain>
    </source>
</reference>
<reference key="2">
    <citation type="journal article" date="1997" name="Nature">
        <title>The nucleotide sequence of Saccharomyces cerevisiae chromosome XII.</title>
        <authorList>
            <person name="Johnston M."/>
            <person name="Hillier L.W."/>
            <person name="Riles L."/>
            <person name="Albermann K."/>
            <person name="Andre B."/>
            <person name="Ansorge W."/>
            <person name="Benes V."/>
            <person name="Brueckner M."/>
            <person name="Delius H."/>
            <person name="Dubois E."/>
            <person name="Duesterhoeft A."/>
            <person name="Entian K.-D."/>
            <person name="Floeth M."/>
            <person name="Goffeau A."/>
            <person name="Hebling U."/>
            <person name="Heumann K."/>
            <person name="Heuss-Neitzel D."/>
            <person name="Hilbert H."/>
            <person name="Hilger F."/>
            <person name="Kleine K."/>
            <person name="Koetter P."/>
            <person name="Louis E.J."/>
            <person name="Messenguy F."/>
            <person name="Mewes H.-W."/>
            <person name="Miosga T."/>
            <person name="Moestl D."/>
            <person name="Mueller-Auer S."/>
            <person name="Nentwich U."/>
            <person name="Obermaier B."/>
            <person name="Piravandi E."/>
            <person name="Pohl T.M."/>
            <person name="Portetelle D."/>
            <person name="Purnelle B."/>
            <person name="Rechmann S."/>
            <person name="Rieger M."/>
            <person name="Rinke M."/>
            <person name="Rose M."/>
            <person name="Scharfe M."/>
            <person name="Scherens B."/>
            <person name="Scholler P."/>
            <person name="Schwager C."/>
            <person name="Schwarz S."/>
            <person name="Underwood A.P."/>
            <person name="Urrestarazu L.A."/>
            <person name="Vandenbol M."/>
            <person name="Verhasselt P."/>
            <person name="Vierendeels F."/>
            <person name="Voet M."/>
            <person name="Volckaert G."/>
            <person name="Voss H."/>
            <person name="Wambutt R."/>
            <person name="Wedler E."/>
            <person name="Wedler H."/>
            <person name="Zimmermann F.K."/>
            <person name="Zollner A."/>
            <person name="Hani J."/>
            <person name="Hoheisel J.D."/>
        </authorList>
    </citation>
    <scope>NUCLEOTIDE SEQUENCE [LARGE SCALE GENOMIC DNA]</scope>
    <source>
        <strain>ATCC 204508 / S288c</strain>
    </source>
</reference>
<reference key="3">
    <citation type="journal article" date="2014" name="G3 (Bethesda)">
        <title>The reference genome sequence of Saccharomyces cerevisiae: Then and now.</title>
        <authorList>
            <person name="Engel S.R."/>
            <person name="Dietrich F.S."/>
            <person name="Fisk D.G."/>
            <person name="Binkley G."/>
            <person name="Balakrishnan R."/>
            <person name="Costanzo M.C."/>
            <person name="Dwight S.S."/>
            <person name="Hitz B.C."/>
            <person name="Karra K."/>
            <person name="Nash R.S."/>
            <person name="Weng S."/>
            <person name="Wong E.D."/>
            <person name="Lloyd P."/>
            <person name="Skrzypek M.S."/>
            <person name="Miyasato S.R."/>
            <person name="Simison M."/>
            <person name="Cherry J.M."/>
        </authorList>
    </citation>
    <scope>GENOME REANNOTATION</scope>
    <source>
        <strain>ATCC 204508 / S288c</strain>
    </source>
</reference>
<reference key="4">
    <citation type="journal article" date="2007" name="Genome Res.">
        <title>Approaching a complete repository of sequence-verified protein-encoding clones for Saccharomyces cerevisiae.</title>
        <authorList>
            <person name="Hu Y."/>
            <person name="Rolfs A."/>
            <person name="Bhullar B."/>
            <person name="Murthy T.V.S."/>
            <person name="Zhu C."/>
            <person name="Berger M.F."/>
            <person name="Camargo A.A."/>
            <person name="Kelley F."/>
            <person name="McCarron S."/>
            <person name="Jepson D."/>
            <person name="Richardson A."/>
            <person name="Raphael J."/>
            <person name="Moreira D."/>
            <person name="Taycher E."/>
            <person name="Zuo D."/>
            <person name="Mohr S."/>
            <person name="Kane M.F."/>
            <person name="Williamson J."/>
            <person name="Simpson A.J.G."/>
            <person name="Bulyk M.L."/>
            <person name="Harlow E."/>
            <person name="Marsischky G."/>
            <person name="Kolodner R.D."/>
            <person name="LaBaer J."/>
        </authorList>
    </citation>
    <scope>NUCLEOTIDE SEQUENCE [GENOMIC DNA]</scope>
    <source>
        <strain>ATCC 204508 / S288c</strain>
    </source>
</reference>
<reference key="5">
    <citation type="journal article" date="2002" name="J. Biol. Chem.">
        <title>Characterization of Saccharomyces cerevisiae acyl-protein thioesterase 1, the enzyme responsible for G protein alpha subunit deacylation in vivo.</title>
        <authorList>
            <person name="Duncan J.A."/>
            <person name="Gilman A.G."/>
        </authorList>
    </citation>
    <scope>FUNCTION</scope>
    <scope>CATALYTIC ACTIVITY</scope>
</reference>
<reference key="6">
    <citation type="journal article" date="2003" name="Nature">
        <title>Global analysis of protein localization in budding yeast.</title>
        <authorList>
            <person name="Huh W.-K."/>
            <person name="Falvo J.V."/>
            <person name="Gerke L.C."/>
            <person name="Carroll A.S."/>
            <person name="Howson R.W."/>
            <person name="Weissman J.S."/>
            <person name="O'Shea E.K."/>
        </authorList>
    </citation>
    <scope>SUBCELLULAR LOCATION [LARGE SCALE ANALYSIS]</scope>
</reference>
<reference key="7">
    <citation type="journal article" date="2003" name="Nature">
        <title>Global analysis of protein expression in yeast.</title>
        <authorList>
            <person name="Ghaemmaghami S."/>
            <person name="Huh W.-K."/>
            <person name="Bower K."/>
            <person name="Howson R.W."/>
            <person name="Belle A."/>
            <person name="Dephoure N."/>
            <person name="O'Shea E.K."/>
            <person name="Weissman J.S."/>
        </authorList>
    </citation>
    <scope>LEVEL OF PROTEIN EXPRESSION [LARGE SCALE ANALYSIS]</scope>
</reference>
<reference key="8">
    <citation type="journal article" date="2004" name="Mol. Cell. Proteomics">
        <title>Synergistic computational and experimental proteomics approaches for more accurate detection of active serine hydrolases in yeast.</title>
        <authorList>
            <person name="Baxter S.M."/>
            <person name="Rosenblum J.S."/>
            <person name="Knutson S."/>
            <person name="Nelson M.R."/>
            <person name="Montimurro J.S."/>
            <person name="Di Gennaro J.A."/>
            <person name="Speir J.A."/>
            <person name="Burbaum J.J."/>
            <person name="Fetrow J.S."/>
        </authorList>
    </citation>
    <scope>IDENTIFICATION BY MASS SPECTROMETRY</scope>
</reference>
<reference key="9">
    <citation type="journal article" date="2009" name="Science">
        <title>Global analysis of Cdk1 substrate phosphorylation sites provides insights into evolution.</title>
        <authorList>
            <person name="Holt L.J."/>
            <person name="Tuch B.B."/>
            <person name="Villen J."/>
            <person name="Johnson A.D."/>
            <person name="Gygi S.P."/>
            <person name="Morgan D.O."/>
        </authorList>
    </citation>
    <scope>IDENTIFICATION BY MASS SPECTROMETRY [LARGE SCALE ANALYSIS]</scope>
</reference>
<feature type="chain" id="PRO_0000229015" description="Acyl-protein thioesterase 1">
    <location>
        <begin position="1"/>
        <end position="227"/>
    </location>
</feature>
<feature type="active site" description="Charge relay system" evidence="1">
    <location>
        <position position="119"/>
    </location>
</feature>
<feature type="active site" description="Charge relay system" evidence="1">
    <location>
        <position position="173"/>
    </location>
</feature>
<feature type="active site" description="Charge relay system" evidence="1">
    <location>
        <position position="207"/>
    </location>
</feature>
<gene>
    <name type="ordered locus">YLR118C</name>
    <name type="ORF">L2955</name>
</gene>
<proteinExistence type="evidence at protein level"/>
<evidence type="ECO:0000250" key="1"/>
<evidence type="ECO:0000269" key="2">
    <source>
    </source>
</evidence>
<evidence type="ECO:0000269" key="3">
    <source>
    </source>
</evidence>
<evidence type="ECO:0000269" key="4">
    <source>
    </source>
</evidence>
<evidence type="ECO:0000305" key="5"/>
<name>APTH1_YEAST</name>
<sequence>MNGLRVAAKIQPARQTIIFLHGLGDTGSGWGFLAQYLQQRDPAAFQHTNFVFPNAPELHVTANGGALMPAWFDILEWDPSFSKVDSDGFMNSLNSIEKTVKQEIDKGIKPEQIIIGGFSQGAALALATSVTLPWKIGGIVALSGFCSIPGILKQHKNGINVKTPIFHGHGDMDPVVPIGLGIKAKQFYQDSCEIQNYEFKVYKGMAHSTVPDELEDLASFIKKSLSS</sequence>
<keyword id="KW-0963">Cytoplasm</keyword>
<keyword id="KW-0276">Fatty acid metabolism</keyword>
<keyword id="KW-0378">Hydrolase</keyword>
<keyword id="KW-0443">Lipid metabolism</keyword>
<keyword id="KW-0539">Nucleus</keyword>
<keyword id="KW-1185">Reference proteome</keyword>
<keyword id="KW-0719">Serine esterase</keyword>
<comment type="function">
    <text evidence="2">Hydrolyzes fatty acids from S-acylated cysteine residues in proteins with a strong preference for palmitoylated G-alpha proteins over other acyl substrates. Mediates the deacylation of G-alpha proteins such as GPA1 in vivo, but has weak or no activity toward palmitoylated Ras proteins. Has weak lysophospholipase activity in vitro; however such activity may not exist in vivo.</text>
</comment>
<comment type="catalytic activity">
    <reaction evidence="2">
        <text>S-hexadecanoyl-L-cysteinyl-[protein] + H2O = L-cysteinyl-[protein] + hexadecanoate + H(+)</text>
        <dbReference type="Rhea" id="RHEA:19233"/>
        <dbReference type="Rhea" id="RHEA-COMP:10131"/>
        <dbReference type="Rhea" id="RHEA-COMP:11032"/>
        <dbReference type="ChEBI" id="CHEBI:7896"/>
        <dbReference type="ChEBI" id="CHEBI:15377"/>
        <dbReference type="ChEBI" id="CHEBI:15378"/>
        <dbReference type="ChEBI" id="CHEBI:29950"/>
        <dbReference type="ChEBI" id="CHEBI:74151"/>
        <dbReference type="EC" id="3.1.2.22"/>
    </reaction>
</comment>
<comment type="subcellular location">
    <subcellularLocation>
        <location evidence="3">Cytoplasm</location>
    </subcellularLocation>
    <subcellularLocation>
        <location evidence="3">Nucleus</location>
    </subcellularLocation>
</comment>
<comment type="miscellaneous">
    <text evidence="4">Present with 1480 molecules/cell in log phase SD medium.</text>
</comment>
<comment type="similarity">
    <text evidence="5">Belongs to the AB hydrolase superfamily. AB hydrolase 2 family.</text>
</comment>
<protein>
    <recommendedName>
        <fullName>Acyl-protein thioesterase 1</fullName>
        <ecNumber evidence="2">3.1.2.-</ecNumber>
    </recommendedName>
    <alternativeName>
        <fullName evidence="5">Palmitoyl-protein hydrolase</fullName>
        <ecNumber evidence="2">3.1.2.22</ecNumber>
    </alternativeName>
</protein>